<organism>
    <name type="scientific">Burkholderia ambifaria (strain ATCC BAA-244 / DSM 16087 / CCUG 44356 / LMG 19182 / AMMD)</name>
    <name type="common">Burkholderia cepacia (strain AMMD)</name>
    <dbReference type="NCBI Taxonomy" id="339670"/>
    <lineage>
        <taxon>Bacteria</taxon>
        <taxon>Pseudomonadati</taxon>
        <taxon>Pseudomonadota</taxon>
        <taxon>Betaproteobacteria</taxon>
        <taxon>Burkholderiales</taxon>
        <taxon>Burkholderiaceae</taxon>
        <taxon>Burkholderia</taxon>
        <taxon>Burkholderia cepacia complex</taxon>
    </lineage>
</organism>
<reference key="1">
    <citation type="submission" date="2006-08" db="EMBL/GenBank/DDBJ databases">
        <title>Complete sequence of chromosome 1 of Burkholderia cepacia AMMD.</title>
        <authorList>
            <person name="Copeland A."/>
            <person name="Lucas S."/>
            <person name="Lapidus A."/>
            <person name="Barry K."/>
            <person name="Detter J.C."/>
            <person name="Glavina del Rio T."/>
            <person name="Hammon N."/>
            <person name="Israni S."/>
            <person name="Pitluck S."/>
            <person name="Bruce D."/>
            <person name="Chain P."/>
            <person name="Malfatti S."/>
            <person name="Shin M."/>
            <person name="Vergez L."/>
            <person name="Schmutz J."/>
            <person name="Larimer F."/>
            <person name="Land M."/>
            <person name="Hauser L."/>
            <person name="Kyrpides N."/>
            <person name="Kim E."/>
            <person name="Parke J."/>
            <person name="Coenye T."/>
            <person name="Konstantinidis K."/>
            <person name="Ramette A."/>
            <person name="Tiedje J."/>
            <person name="Richardson P."/>
        </authorList>
    </citation>
    <scope>NUCLEOTIDE SEQUENCE [LARGE SCALE GENOMIC DNA]</scope>
    <source>
        <strain>ATCC BAA-244 / DSM 16087 / CCUG 44356 / LMG 19182 / AMMD</strain>
    </source>
</reference>
<keyword id="KW-0997">Cell inner membrane</keyword>
<keyword id="KW-1003">Cell membrane</keyword>
<keyword id="KW-0472">Membrane</keyword>
<keyword id="KW-0812">Transmembrane</keyword>
<keyword id="KW-1133">Transmembrane helix</keyword>
<dbReference type="EMBL" id="CP000440">
    <property type="protein sequence ID" value="ABI86718.1"/>
    <property type="molecule type" value="Genomic_DNA"/>
</dbReference>
<dbReference type="RefSeq" id="WP_011656489.1">
    <property type="nucleotide sequence ID" value="NZ_CP009798.1"/>
</dbReference>
<dbReference type="SMR" id="Q0BGK5"/>
<dbReference type="KEGG" id="bam:Bamb_1160"/>
<dbReference type="PATRIC" id="fig|339670.21.peg.402"/>
<dbReference type="eggNOG" id="COG1742">
    <property type="taxonomic scope" value="Bacteria"/>
</dbReference>
<dbReference type="Proteomes" id="UP000000662">
    <property type="component" value="Chromosome 1"/>
</dbReference>
<dbReference type="GO" id="GO:0005886">
    <property type="term" value="C:plasma membrane"/>
    <property type="evidence" value="ECO:0007669"/>
    <property type="project" value="UniProtKB-SubCell"/>
</dbReference>
<dbReference type="HAMAP" id="MF_00010">
    <property type="entry name" value="UPF0060"/>
    <property type="match status" value="1"/>
</dbReference>
<dbReference type="InterPro" id="IPR003844">
    <property type="entry name" value="UPF0060"/>
</dbReference>
<dbReference type="NCBIfam" id="NF002586">
    <property type="entry name" value="PRK02237.1"/>
    <property type="match status" value="1"/>
</dbReference>
<dbReference type="PANTHER" id="PTHR36116">
    <property type="entry name" value="UPF0060 MEMBRANE PROTEIN YNFA"/>
    <property type="match status" value="1"/>
</dbReference>
<dbReference type="PANTHER" id="PTHR36116:SF1">
    <property type="entry name" value="UPF0060 MEMBRANE PROTEIN YNFA"/>
    <property type="match status" value="1"/>
</dbReference>
<dbReference type="Pfam" id="PF02694">
    <property type="entry name" value="UPF0060"/>
    <property type="match status" value="1"/>
</dbReference>
<dbReference type="SUPFAM" id="SSF103481">
    <property type="entry name" value="Multidrug resistance efflux transporter EmrE"/>
    <property type="match status" value="1"/>
</dbReference>
<comment type="subcellular location">
    <subcellularLocation>
        <location evidence="1">Cell inner membrane</location>
        <topology evidence="1">Multi-pass membrane protein</topology>
    </subcellularLocation>
</comment>
<comment type="similarity">
    <text evidence="1">Belongs to the UPF0060 family.</text>
</comment>
<sequence>MTELMKIAALFAVTALAEIVGCYLPWLVLKGGRPVWLLVPAALSLALFAWLLTLHPSAAGRTYAAYGGVYIAVALIWLRVVDGVALTRWDAAGAVLALGGMAVIALQPRA</sequence>
<protein>
    <recommendedName>
        <fullName evidence="1">UPF0060 membrane protein Bamb_1160</fullName>
    </recommendedName>
</protein>
<proteinExistence type="inferred from homology"/>
<evidence type="ECO:0000255" key="1">
    <source>
        <dbReference type="HAMAP-Rule" id="MF_00010"/>
    </source>
</evidence>
<accession>Q0BGK5</accession>
<feature type="chain" id="PRO_0000282209" description="UPF0060 membrane protein Bamb_1160">
    <location>
        <begin position="1"/>
        <end position="110"/>
    </location>
</feature>
<feature type="transmembrane region" description="Helical" evidence="1">
    <location>
        <begin position="9"/>
        <end position="29"/>
    </location>
</feature>
<feature type="transmembrane region" description="Helical" evidence="1">
    <location>
        <begin position="34"/>
        <end position="54"/>
    </location>
</feature>
<feature type="transmembrane region" description="Helical" evidence="1">
    <location>
        <begin position="66"/>
        <end position="86"/>
    </location>
</feature>
<feature type="transmembrane region" description="Helical" evidence="1">
    <location>
        <begin position="88"/>
        <end position="108"/>
    </location>
</feature>
<gene>
    <name type="ordered locus">Bamb_1160</name>
</gene>
<name>Y1160_BURCM</name>